<reference key="1">
    <citation type="submission" date="2006-08" db="EMBL/GenBank/DDBJ databases">
        <title>Complete sequence of Shewanella frigidimarina NCIMB 400.</title>
        <authorList>
            <consortium name="US DOE Joint Genome Institute"/>
            <person name="Copeland A."/>
            <person name="Lucas S."/>
            <person name="Lapidus A."/>
            <person name="Barry K."/>
            <person name="Detter J.C."/>
            <person name="Glavina del Rio T."/>
            <person name="Hammon N."/>
            <person name="Israni S."/>
            <person name="Dalin E."/>
            <person name="Tice H."/>
            <person name="Pitluck S."/>
            <person name="Fredrickson J.K."/>
            <person name="Kolker E."/>
            <person name="McCuel L.A."/>
            <person name="DiChristina T."/>
            <person name="Nealson K.H."/>
            <person name="Newman D."/>
            <person name="Tiedje J.M."/>
            <person name="Zhou J."/>
            <person name="Romine M.F."/>
            <person name="Culley D.E."/>
            <person name="Serres M."/>
            <person name="Chertkov O."/>
            <person name="Brettin T."/>
            <person name="Bruce D."/>
            <person name="Han C."/>
            <person name="Tapia R."/>
            <person name="Gilna P."/>
            <person name="Schmutz J."/>
            <person name="Larimer F."/>
            <person name="Land M."/>
            <person name="Hauser L."/>
            <person name="Kyrpides N."/>
            <person name="Mikhailova N."/>
            <person name="Richardson P."/>
        </authorList>
    </citation>
    <scope>NUCLEOTIDE SEQUENCE [LARGE SCALE GENOMIC DNA]</scope>
    <source>
        <strain>NCIMB 400</strain>
    </source>
</reference>
<organism>
    <name type="scientific">Shewanella frigidimarina (strain NCIMB 400)</name>
    <dbReference type="NCBI Taxonomy" id="318167"/>
    <lineage>
        <taxon>Bacteria</taxon>
        <taxon>Pseudomonadati</taxon>
        <taxon>Pseudomonadota</taxon>
        <taxon>Gammaproteobacteria</taxon>
        <taxon>Alteromonadales</taxon>
        <taxon>Shewanellaceae</taxon>
        <taxon>Shewanella</taxon>
    </lineage>
</organism>
<sequence>MTTKHDVKTFQGFILTLQEYWAQQGCAIVQPLDMEVGAGTFHPQTFLRSLGPEPMSSAYVQPSRRPTDGRYGENPNRLQHYYQFQVVLKPSPDNIQELYLGSLEALGIDTKVHDIRFVEDNWESPTLGAWGLGWEIWLNGMEVTQFTYFQQVGGIECSPVTGEITYGLERLAMYIQEVDSVYDLVWTDGPLGRVTYGDIFHQNEVEQSTYNFEHADVDFMFTLFDQCEKMCMHLLSLEKPLPLPAYEQVMKASHAFNLLDARHAISVTERQRYILRVRTMAKGVAESYYQAREALGFPMCK</sequence>
<comment type="catalytic activity">
    <reaction evidence="1">
        <text>tRNA(Gly) + glycine + ATP = glycyl-tRNA(Gly) + AMP + diphosphate</text>
        <dbReference type="Rhea" id="RHEA:16013"/>
        <dbReference type="Rhea" id="RHEA-COMP:9664"/>
        <dbReference type="Rhea" id="RHEA-COMP:9683"/>
        <dbReference type="ChEBI" id="CHEBI:30616"/>
        <dbReference type="ChEBI" id="CHEBI:33019"/>
        <dbReference type="ChEBI" id="CHEBI:57305"/>
        <dbReference type="ChEBI" id="CHEBI:78442"/>
        <dbReference type="ChEBI" id="CHEBI:78522"/>
        <dbReference type="ChEBI" id="CHEBI:456215"/>
        <dbReference type="EC" id="6.1.1.14"/>
    </reaction>
</comment>
<comment type="subunit">
    <text evidence="1">Tetramer of two alpha and two beta subunits.</text>
</comment>
<comment type="subcellular location">
    <subcellularLocation>
        <location evidence="1">Cytoplasm</location>
    </subcellularLocation>
</comment>
<comment type="similarity">
    <text evidence="1">Belongs to the class-II aminoacyl-tRNA synthetase family.</text>
</comment>
<feature type="chain" id="PRO_1000047486" description="Glycine--tRNA ligase alpha subunit">
    <location>
        <begin position="1"/>
        <end position="301"/>
    </location>
</feature>
<keyword id="KW-0030">Aminoacyl-tRNA synthetase</keyword>
<keyword id="KW-0067">ATP-binding</keyword>
<keyword id="KW-0963">Cytoplasm</keyword>
<keyword id="KW-0436">Ligase</keyword>
<keyword id="KW-0547">Nucleotide-binding</keyword>
<keyword id="KW-0648">Protein biosynthesis</keyword>
<keyword id="KW-1185">Reference proteome</keyword>
<protein>
    <recommendedName>
        <fullName evidence="1">Glycine--tRNA ligase alpha subunit</fullName>
        <ecNumber evidence="1">6.1.1.14</ecNumber>
    </recommendedName>
    <alternativeName>
        <fullName evidence="1">Glycyl-tRNA synthetase alpha subunit</fullName>
        <shortName evidence="1">GlyRS</shortName>
    </alternativeName>
</protein>
<accession>Q08A45</accession>
<name>SYGA_SHEFN</name>
<dbReference type="EC" id="6.1.1.14" evidence="1"/>
<dbReference type="EMBL" id="CP000447">
    <property type="protein sequence ID" value="ABI69870.1"/>
    <property type="molecule type" value="Genomic_DNA"/>
</dbReference>
<dbReference type="RefSeq" id="WP_011635499.1">
    <property type="nucleotide sequence ID" value="NC_008345.1"/>
</dbReference>
<dbReference type="SMR" id="Q08A45"/>
<dbReference type="STRING" id="318167.Sfri_0007"/>
<dbReference type="KEGG" id="sfr:Sfri_0007"/>
<dbReference type="eggNOG" id="COG0752">
    <property type="taxonomic scope" value="Bacteria"/>
</dbReference>
<dbReference type="HOGENOM" id="CLU_057066_1_0_6"/>
<dbReference type="OrthoDB" id="9802183at2"/>
<dbReference type="Proteomes" id="UP000000684">
    <property type="component" value="Chromosome"/>
</dbReference>
<dbReference type="GO" id="GO:0005829">
    <property type="term" value="C:cytosol"/>
    <property type="evidence" value="ECO:0007669"/>
    <property type="project" value="TreeGrafter"/>
</dbReference>
<dbReference type="GO" id="GO:0005524">
    <property type="term" value="F:ATP binding"/>
    <property type="evidence" value="ECO:0007669"/>
    <property type="project" value="UniProtKB-UniRule"/>
</dbReference>
<dbReference type="GO" id="GO:0004820">
    <property type="term" value="F:glycine-tRNA ligase activity"/>
    <property type="evidence" value="ECO:0007669"/>
    <property type="project" value="UniProtKB-UniRule"/>
</dbReference>
<dbReference type="GO" id="GO:0006426">
    <property type="term" value="P:glycyl-tRNA aminoacylation"/>
    <property type="evidence" value="ECO:0007669"/>
    <property type="project" value="UniProtKB-UniRule"/>
</dbReference>
<dbReference type="CDD" id="cd00733">
    <property type="entry name" value="GlyRS_alpha_core"/>
    <property type="match status" value="1"/>
</dbReference>
<dbReference type="FunFam" id="3.30.930.10:FF:000006">
    <property type="entry name" value="Glycine--tRNA ligase alpha subunit"/>
    <property type="match status" value="1"/>
</dbReference>
<dbReference type="Gene3D" id="3.30.930.10">
    <property type="entry name" value="Bira Bifunctional Protein, Domain 2"/>
    <property type="match status" value="1"/>
</dbReference>
<dbReference type="Gene3D" id="1.20.58.180">
    <property type="entry name" value="Class II aaRS and biotin synthetases, domain 2"/>
    <property type="match status" value="1"/>
</dbReference>
<dbReference type="HAMAP" id="MF_00254">
    <property type="entry name" value="Gly_tRNA_synth_alpha"/>
    <property type="match status" value="1"/>
</dbReference>
<dbReference type="InterPro" id="IPR045864">
    <property type="entry name" value="aa-tRNA-synth_II/BPL/LPL"/>
</dbReference>
<dbReference type="InterPro" id="IPR006194">
    <property type="entry name" value="Gly-tRNA-synth_heterodimer"/>
</dbReference>
<dbReference type="InterPro" id="IPR002310">
    <property type="entry name" value="Gly-tRNA_ligase_asu"/>
</dbReference>
<dbReference type="NCBIfam" id="TIGR00388">
    <property type="entry name" value="glyQ"/>
    <property type="match status" value="1"/>
</dbReference>
<dbReference type="NCBIfam" id="NF006827">
    <property type="entry name" value="PRK09348.1"/>
    <property type="match status" value="1"/>
</dbReference>
<dbReference type="PANTHER" id="PTHR30075:SF2">
    <property type="entry name" value="GLYCINE--TRNA LIGASE, CHLOROPLASTIC_MITOCHONDRIAL 2"/>
    <property type="match status" value="1"/>
</dbReference>
<dbReference type="PANTHER" id="PTHR30075">
    <property type="entry name" value="GLYCYL-TRNA SYNTHETASE"/>
    <property type="match status" value="1"/>
</dbReference>
<dbReference type="Pfam" id="PF02091">
    <property type="entry name" value="tRNA-synt_2e"/>
    <property type="match status" value="1"/>
</dbReference>
<dbReference type="PRINTS" id="PR01044">
    <property type="entry name" value="TRNASYNTHGA"/>
</dbReference>
<dbReference type="SUPFAM" id="SSF55681">
    <property type="entry name" value="Class II aaRS and biotin synthetases"/>
    <property type="match status" value="1"/>
</dbReference>
<dbReference type="PROSITE" id="PS50861">
    <property type="entry name" value="AA_TRNA_LIGASE_II_GLYAB"/>
    <property type="match status" value="1"/>
</dbReference>
<gene>
    <name evidence="1" type="primary">glyQ</name>
    <name type="ordered locus">Sfri_0007</name>
</gene>
<evidence type="ECO:0000255" key="1">
    <source>
        <dbReference type="HAMAP-Rule" id="MF_00254"/>
    </source>
</evidence>
<proteinExistence type="inferred from homology"/>